<feature type="chain" id="PRO_0000239062" description="Superoxide dismutase 1 copper chaperone">
    <location>
        <begin position="1"/>
        <end position="250"/>
    </location>
</feature>
<feature type="domain" description="HMA" evidence="3">
    <location>
        <begin position="4"/>
        <end position="67"/>
    </location>
</feature>
<feature type="binding site" evidence="3">
    <location>
        <position position="15"/>
    </location>
    <ligand>
        <name>Cu cation</name>
        <dbReference type="ChEBI" id="CHEBI:23378"/>
        <label>1</label>
    </ligand>
</feature>
<feature type="binding site" evidence="3">
    <location>
        <position position="18"/>
    </location>
    <ligand>
        <name>Cu cation</name>
        <dbReference type="ChEBI" id="CHEBI:23378"/>
        <label>1</label>
    </ligand>
</feature>
<feature type="binding site">
    <location>
        <position position="229"/>
    </location>
    <ligand>
        <name>Cu cation</name>
        <dbReference type="ChEBI" id="CHEBI:23378"/>
        <label>2</label>
    </ligand>
</feature>
<feature type="binding site">
    <location>
        <position position="231"/>
    </location>
    <ligand>
        <name>Cu cation</name>
        <dbReference type="ChEBI" id="CHEBI:23378"/>
        <label>2</label>
    </ligand>
</feature>
<feature type="disulfide bond" description="Interchain (with C-58 in apo-SOD1)" evidence="2">
    <location>
        <position position="229"/>
    </location>
</feature>
<sequence>MTKSFEIVFAVPMECQSCVDSVSSSLKSLNGISKYDIDLKSNLVTTEGSVPPSEIVKAIQSTGKDAIIRGTGAPNSAAVCILESFDPKDIQQPVKGLARIVSVGANDLVVDLTVNGLPQGVYYPSIRKSGNLSKGALSTGECFYPLGPLEVDQPVSESTTINSLGAASPTVEEGSLYAGQGFLHADLNISDLIGRSVILSKLKDKTAPDSLCGVIARSAGAWENDKQVCSCSGKTVWQERSEALAKGLKS</sequence>
<protein>
    <recommendedName>
        <fullName>Superoxide dismutase 1 copper chaperone</fullName>
    </recommendedName>
</protein>
<organism>
    <name type="scientific">Debaryomyces hansenii (strain ATCC 36239 / CBS 767 / BCRC 21394 / JCM 1990 / NBRC 0083 / IGC 2968)</name>
    <name type="common">Yeast</name>
    <name type="synonym">Torulaspora hansenii</name>
    <dbReference type="NCBI Taxonomy" id="284592"/>
    <lineage>
        <taxon>Eukaryota</taxon>
        <taxon>Fungi</taxon>
        <taxon>Dikarya</taxon>
        <taxon>Ascomycota</taxon>
        <taxon>Saccharomycotina</taxon>
        <taxon>Pichiomycetes</taxon>
        <taxon>Debaryomycetaceae</taxon>
        <taxon>Debaryomyces</taxon>
    </lineage>
</organism>
<evidence type="ECO:0000250" key="1"/>
<evidence type="ECO:0000250" key="2">
    <source>
        <dbReference type="UniProtKB" id="P40202"/>
    </source>
</evidence>
<evidence type="ECO:0000255" key="3">
    <source>
        <dbReference type="PROSITE-ProRule" id="PRU00280"/>
    </source>
</evidence>
<evidence type="ECO:0000305" key="4"/>
<gene>
    <name type="primary">CCS1</name>
    <name type="ordered locus">DEHA2F24486g</name>
</gene>
<keyword id="KW-0143">Chaperone</keyword>
<keyword id="KW-0186">Copper</keyword>
<keyword id="KW-0963">Cytoplasm</keyword>
<keyword id="KW-1015">Disulfide bond</keyword>
<keyword id="KW-0479">Metal-binding</keyword>
<keyword id="KW-1185">Reference proteome</keyword>
<proteinExistence type="inferred from homology"/>
<dbReference type="EMBL" id="CR382138">
    <property type="protein sequence ID" value="CAG89816.2"/>
    <property type="molecule type" value="Genomic_DNA"/>
</dbReference>
<dbReference type="RefSeq" id="XP_461405.2">
    <property type="nucleotide sequence ID" value="XM_461405.1"/>
</dbReference>
<dbReference type="SMR" id="Q6BK66"/>
<dbReference type="FunCoup" id="Q6BK66">
    <property type="interactions" value="302"/>
</dbReference>
<dbReference type="STRING" id="284592.Q6BK66"/>
<dbReference type="GeneID" id="2903791"/>
<dbReference type="KEGG" id="dha:DEHA2F24486g"/>
<dbReference type="VEuPathDB" id="FungiDB:DEHA2F24486g"/>
<dbReference type="eggNOG" id="KOG4656">
    <property type="taxonomic scope" value="Eukaryota"/>
</dbReference>
<dbReference type="HOGENOM" id="CLU_056632_0_0_1"/>
<dbReference type="InParanoid" id="Q6BK66"/>
<dbReference type="OMA" id="KNVWEER"/>
<dbReference type="OrthoDB" id="666972at2759"/>
<dbReference type="Proteomes" id="UP000000599">
    <property type="component" value="Chromosome F"/>
</dbReference>
<dbReference type="GO" id="GO:0005829">
    <property type="term" value="C:cytosol"/>
    <property type="evidence" value="ECO:0007669"/>
    <property type="project" value="EnsemblFungi"/>
</dbReference>
<dbReference type="GO" id="GO:0005743">
    <property type="term" value="C:mitochondrial inner membrane"/>
    <property type="evidence" value="ECO:0007669"/>
    <property type="project" value="EnsemblFungi"/>
</dbReference>
<dbReference type="GO" id="GO:0005634">
    <property type="term" value="C:nucleus"/>
    <property type="evidence" value="ECO:0007669"/>
    <property type="project" value="EnsemblFungi"/>
</dbReference>
<dbReference type="GO" id="GO:0101031">
    <property type="term" value="C:protein folding chaperone complex"/>
    <property type="evidence" value="ECO:0007669"/>
    <property type="project" value="EnsemblFungi"/>
</dbReference>
<dbReference type="GO" id="GO:1902693">
    <property type="term" value="C:superoxide dismutase complex"/>
    <property type="evidence" value="ECO:0007669"/>
    <property type="project" value="EnsemblFungi"/>
</dbReference>
<dbReference type="GO" id="GO:0046872">
    <property type="term" value="F:metal ion binding"/>
    <property type="evidence" value="ECO:0007669"/>
    <property type="project" value="UniProtKB-KW"/>
</dbReference>
<dbReference type="GO" id="GO:0016532">
    <property type="term" value="F:superoxide dismutase copper chaperone activity"/>
    <property type="evidence" value="ECO:0007669"/>
    <property type="project" value="EnsemblFungi"/>
</dbReference>
<dbReference type="GO" id="GO:0006825">
    <property type="term" value="P:copper ion transport"/>
    <property type="evidence" value="ECO:0007669"/>
    <property type="project" value="EnsemblFungi"/>
</dbReference>
<dbReference type="GO" id="GO:0019430">
    <property type="term" value="P:removal of superoxide radicals"/>
    <property type="evidence" value="ECO:0007669"/>
    <property type="project" value="EnsemblFungi"/>
</dbReference>
<dbReference type="CDD" id="cd00371">
    <property type="entry name" value="HMA"/>
    <property type="match status" value="1"/>
</dbReference>
<dbReference type="FunFam" id="2.60.40.200:FF:000014">
    <property type="entry name" value="Superoxide dismutase 1 copper chaperone"/>
    <property type="match status" value="1"/>
</dbReference>
<dbReference type="FunFam" id="3.30.70.100:FF:000038">
    <property type="entry name" value="Superoxide dismutase 1 copper chaperone"/>
    <property type="match status" value="1"/>
</dbReference>
<dbReference type="Gene3D" id="3.30.70.100">
    <property type="match status" value="1"/>
</dbReference>
<dbReference type="Gene3D" id="2.60.40.200">
    <property type="entry name" value="Superoxide dismutase, copper/zinc binding domain"/>
    <property type="match status" value="1"/>
</dbReference>
<dbReference type="InterPro" id="IPR006121">
    <property type="entry name" value="HMA_dom"/>
</dbReference>
<dbReference type="InterPro" id="IPR036163">
    <property type="entry name" value="HMA_dom_sf"/>
</dbReference>
<dbReference type="InterPro" id="IPR036423">
    <property type="entry name" value="SOD-like_Cu/Zn_dom_sf"/>
</dbReference>
<dbReference type="PANTHER" id="PTHR22814">
    <property type="entry name" value="COPPER TRANSPORT PROTEIN ATOX1-RELATED"/>
    <property type="match status" value="1"/>
</dbReference>
<dbReference type="PANTHER" id="PTHR22814:SF287">
    <property type="entry name" value="COPPER TRANSPORT PROTEIN ATX1"/>
    <property type="match status" value="1"/>
</dbReference>
<dbReference type="Pfam" id="PF00403">
    <property type="entry name" value="HMA"/>
    <property type="match status" value="1"/>
</dbReference>
<dbReference type="SUPFAM" id="SSF49329">
    <property type="entry name" value="Cu,Zn superoxide dismutase-like"/>
    <property type="match status" value="1"/>
</dbReference>
<dbReference type="SUPFAM" id="SSF55008">
    <property type="entry name" value="HMA, heavy metal-associated domain"/>
    <property type="match status" value="1"/>
</dbReference>
<dbReference type="PROSITE" id="PS50846">
    <property type="entry name" value="HMA_2"/>
    <property type="match status" value="1"/>
</dbReference>
<reference key="1">
    <citation type="journal article" date="2004" name="Nature">
        <title>Genome evolution in yeasts.</title>
        <authorList>
            <person name="Dujon B."/>
            <person name="Sherman D."/>
            <person name="Fischer G."/>
            <person name="Durrens P."/>
            <person name="Casaregola S."/>
            <person name="Lafontaine I."/>
            <person name="de Montigny J."/>
            <person name="Marck C."/>
            <person name="Neuveglise C."/>
            <person name="Talla E."/>
            <person name="Goffard N."/>
            <person name="Frangeul L."/>
            <person name="Aigle M."/>
            <person name="Anthouard V."/>
            <person name="Babour A."/>
            <person name="Barbe V."/>
            <person name="Barnay S."/>
            <person name="Blanchin S."/>
            <person name="Beckerich J.-M."/>
            <person name="Beyne E."/>
            <person name="Bleykasten C."/>
            <person name="Boisrame A."/>
            <person name="Boyer J."/>
            <person name="Cattolico L."/>
            <person name="Confanioleri F."/>
            <person name="de Daruvar A."/>
            <person name="Despons L."/>
            <person name="Fabre E."/>
            <person name="Fairhead C."/>
            <person name="Ferry-Dumazet H."/>
            <person name="Groppi A."/>
            <person name="Hantraye F."/>
            <person name="Hennequin C."/>
            <person name="Jauniaux N."/>
            <person name="Joyet P."/>
            <person name="Kachouri R."/>
            <person name="Kerrest A."/>
            <person name="Koszul R."/>
            <person name="Lemaire M."/>
            <person name="Lesur I."/>
            <person name="Ma L."/>
            <person name="Muller H."/>
            <person name="Nicaud J.-M."/>
            <person name="Nikolski M."/>
            <person name="Oztas S."/>
            <person name="Ozier-Kalogeropoulos O."/>
            <person name="Pellenz S."/>
            <person name="Potier S."/>
            <person name="Richard G.-F."/>
            <person name="Straub M.-L."/>
            <person name="Suleau A."/>
            <person name="Swennen D."/>
            <person name="Tekaia F."/>
            <person name="Wesolowski-Louvel M."/>
            <person name="Westhof E."/>
            <person name="Wirth B."/>
            <person name="Zeniou-Meyer M."/>
            <person name="Zivanovic Y."/>
            <person name="Bolotin-Fukuhara M."/>
            <person name="Thierry A."/>
            <person name="Bouchier C."/>
            <person name="Caudron B."/>
            <person name="Scarpelli C."/>
            <person name="Gaillardin C."/>
            <person name="Weissenbach J."/>
            <person name="Wincker P."/>
            <person name="Souciet J.-L."/>
        </authorList>
    </citation>
    <scope>NUCLEOTIDE SEQUENCE [LARGE SCALE GENOMIC DNA]</scope>
    <source>
        <strain>ATCC 36239 / CBS 767 / BCRC 21394 / JCM 1990 / NBRC 0083 / IGC 2968</strain>
    </source>
</reference>
<accession>Q6BK66</accession>
<name>CCS1_DEBHA</name>
<comment type="function">
    <text evidence="1">Copper chaperone for superoxide dismutase 1 (SOD1). Binds copper ions and delivers them specifically to SOD1 (By similarity).</text>
</comment>
<comment type="cofactor">
    <cofactor evidence="1">
        <name>Cu(2+)</name>
        <dbReference type="ChEBI" id="CHEBI:29036"/>
    </cofactor>
    <text evidence="1">Binds 2 copper ions per subunit.</text>
</comment>
<comment type="subcellular location">
    <subcellularLocation>
        <location evidence="1">Cytoplasm</location>
    </subcellularLocation>
</comment>
<comment type="similarity">
    <text evidence="4">Belongs to the CCS1 family.</text>
</comment>